<gene>
    <name evidence="1" type="primary">murB</name>
    <name type="ordered locus">Glov_0668</name>
</gene>
<dbReference type="EC" id="1.3.1.98" evidence="1"/>
<dbReference type="EMBL" id="CP001089">
    <property type="protein sequence ID" value="ACD94394.1"/>
    <property type="molecule type" value="Genomic_DNA"/>
</dbReference>
<dbReference type="RefSeq" id="WP_012468750.1">
    <property type="nucleotide sequence ID" value="NC_010814.1"/>
</dbReference>
<dbReference type="SMR" id="B3E3Y0"/>
<dbReference type="STRING" id="398767.Glov_0668"/>
<dbReference type="KEGG" id="glo:Glov_0668"/>
<dbReference type="eggNOG" id="COG0812">
    <property type="taxonomic scope" value="Bacteria"/>
</dbReference>
<dbReference type="HOGENOM" id="CLU_035304_1_1_7"/>
<dbReference type="OrthoDB" id="9804753at2"/>
<dbReference type="UniPathway" id="UPA00219"/>
<dbReference type="Proteomes" id="UP000002420">
    <property type="component" value="Chromosome"/>
</dbReference>
<dbReference type="GO" id="GO:0005829">
    <property type="term" value="C:cytosol"/>
    <property type="evidence" value="ECO:0007669"/>
    <property type="project" value="TreeGrafter"/>
</dbReference>
<dbReference type="GO" id="GO:0071949">
    <property type="term" value="F:FAD binding"/>
    <property type="evidence" value="ECO:0007669"/>
    <property type="project" value="InterPro"/>
</dbReference>
<dbReference type="GO" id="GO:0008762">
    <property type="term" value="F:UDP-N-acetylmuramate dehydrogenase activity"/>
    <property type="evidence" value="ECO:0007669"/>
    <property type="project" value="UniProtKB-UniRule"/>
</dbReference>
<dbReference type="GO" id="GO:0051301">
    <property type="term" value="P:cell division"/>
    <property type="evidence" value="ECO:0007669"/>
    <property type="project" value="UniProtKB-KW"/>
</dbReference>
<dbReference type="GO" id="GO:0071555">
    <property type="term" value="P:cell wall organization"/>
    <property type="evidence" value="ECO:0007669"/>
    <property type="project" value="UniProtKB-KW"/>
</dbReference>
<dbReference type="GO" id="GO:0009252">
    <property type="term" value="P:peptidoglycan biosynthetic process"/>
    <property type="evidence" value="ECO:0007669"/>
    <property type="project" value="UniProtKB-UniRule"/>
</dbReference>
<dbReference type="GO" id="GO:0008360">
    <property type="term" value="P:regulation of cell shape"/>
    <property type="evidence" value="ECO:0007669"/>
    <property type="project" value="UniProtKB-KW"/>
</dbReference>
<dbReference type="Gene3D" id="3.30.465.10">
    <property type="match status" value="1"/>
</dbReference>
<dbReference type="Gene3D" id="3.90.78.10">
    <property type="entry name" value="UDP-N-acetylenolpyruvoylglucosamine reductase, C-terminal domain"/>
    <property type="match status" value="1"/>
</dbReference>
<dbReference type="Gene3D" id="3.30.43.10">
    <property type="entry name" value="Uridine Diphospho-n-acetylenolpyruvylglucosamine Reductase, domain 2"/>
    <property type="match status" value="1"/>
</dbReference>
<dbReference type="HAMAP" id="MF_00037">
    <property type="entry name" value="MurB"/>
    <property type="match status" value="1"/>
</dbReference>
<dbReference type="InterPro" id="IPR016166">
    <property type="entry name" value="FAD-bd_PCMH"/>
</dbReference>
<dbReference type="InterPro" id="IPR036318">
    <property type="entry name" value="FAD-bd_PCMH-like_sf"/>
</dbReference>
<dbReference type="InterPro" id="IPR016167">
    <property type="entry name" value="FAD-bd_PCMH_sub1"/>
</dbReference>
<dbReference type="InterPro" id="IPR016169">
    <property type="entry name" value="FAD-bd_PCMH_sub2"/>
</dbReference>
<dbReference type="InterPro" id="IPR003170">
    <property type="entry name" value="MurB"/>
</dbReference>
<dbReference type="InterPro" id="IPR011601">
    <property type="entry name" value="MurB_C"/>
</dbReference>
<dbReference type="InterPro" id="IPR036635">
    <property type="entry name" value="MurB_C_sf"/>
</dbReference>
<dbReference type="InterPro" id="IPR006094">
    <property type="entry name" value="Oxid_FAD_bind_N"/>
</dbReference>
<dbReference type="NCBIfam" id="TIGR00179">
    <property type="entry name" value="murB"/>
    <property type="match status" value="1"/>
</dbReference>
<dbReference type="NCBIfam" id="NF010480">
    <property type="entry name" value="PRK13905.1"/>
    <property type="match status" value="1"/>
</dbReference>
<dbReference type="PANTHER" id="PTHR21071">
    <property type="entry name" value="UDP-N-ACETYLENOLPYRUVOYLGLUCOSAMINE REDUCTASE"/>
    <property type="match status" value="1"/>
</dbReference>
<dbReference type="PANTHER" id="PTHR21071:SF4">
    <property type="entry name" value="UDP-N-ACETYLENOLPYRUVOYLGLUCOSAMINE REDUCTASE"/>
    <property type="match status" value="1"/>
</dbReference>
<dbReference type="Pfam" id="PF01565">
    <property type="entry name" value="FAD_binding_4"/>
    <property type="match status" value="1"/>
</dbReference>
<dbReference type="Pfam" id="PF02873">
    <property type="entry name" value="MurB_C"/>
    <property type="match status" value="1"/>
</dbReference>
<dbReference type="SUPFAM" id="SSF56176">
    <property type="entry name" value="FAD-binding/transporter-associated domain-like"/>
    <property type="match status" value="1"/>
</dbReference>
<dbReference type="SUPFAM" id="SSF56194">
    <property type="entry name" value="Uridine diphospho-N-Acetylenolpyruvylglucosamine reductase, MurB, C-terminal domain"/>
    <property type="match status" value="1"/>
</dbReference>
<dbReference type="PROSITE" id="PS51387">
    <property type="entry name" value="FAD_PCMH"/>
    <property type="match status" value="1"/>
</dbReference>
<accession>B3E3Y0</accession>
<protein>
    <recommendedName>
        <fullName evidence="1">UDP-N-acetylenolpyruvoylglucosamine reductase</fullName>
        <ecNumber evidence="1">1.3.1.98</ecNumber>
    </recommendedName>
    <alternativeName>
        <fullName evidence="1">UDP-N-acetylmuramate dehydrogenase</fullName>
    </alternativeName>
</protein>
<feature type="chain" id="PRO_1000191423" description="UDP-N-acetylenolpyruvoylglucosamine reductase">
    <location>
        <begin position="1"/>
        <end position="302"/>
    </location>
</feature>
<feature type="domain" description="FAD-binding PCMH-type" evidence="1">
    <location>
        <begin position="29"/>
        <end position="192"/>
    </location>
</feature>
<feature type="active site" evidence="1">
    <location>
        <position position="172"/>
    </location>
</feature>
<feature type="active site" description="Proton donor" evidence="1">
    <location>
        <position position="221"/>
    </location>
</feature>
<feature type="active site" evidence="1">
    <location>
        <position position="291"/>
    </location>
</feature>
<sequence length="302" mass="32804">MHAGLEHIRDWFKGELLFHEPLARHVSLKVGGPVDLLATPDSREELQQLVTLLDQQQIPRFVLGGGFNLLPSDVGYRGCAISLKQINRLQLDDTVVAIEAGASNQSLARAVAELGLSGIEFLIGIPGSVGGAVRMNAGAHGSDIFSVVKTVTLLDQGQFRELPREQLTYGYRCFEIPDNSVIVAVTLQLSEDSLQAVRSRMEEQLGLRWATQNVKFPNAGSFFKNPPGESAWRLIDQAGLRGFSIGNAQVSEVHTNFLINRGNATAADFRALAAAVKERVKATCGIELEEEVQLLDSGECGQ</sequence>
<name>MURB_TRIL1</name>
<comment type="function">
    <text evidence="1">Cell wall formation.</text>
</comment>
<comment type="catalytic activity">
    <reaction evidence="1">
        <text>UDP-N-acetyl-alpha-D-muramate + NADP(+) = UDP-N-acetyl-3-O-(1-carboxyvinyl)-alpha-D-glucosamine + NADPH + H(+)</text>
        <dbReference type="Rhea" id="RHEA:12248"/>
        <dbReference type="ChEBI" id="CHEBI:15378"/>
        <dbReference type="ChEBI" id="CHEBI:57783"/>
        <dbReference type="ChEBI" id="CHEBI:58349"/>
        <dbReference type="ChEBI" id="CHEBI:68483"/>
        <dbReference type="ChEBI" id="CHEBI:70757"/>
        <dbReference type="EC" id="1.3.1.98"/>
    </reaction>
</comment>
<comment type="cofactor">
    <cofactor evidence="1">
        <name>FAD</name>
        <dbReference type="ChEBI" id="CHEBI:57692"/>
    </cofactor>
</comment>
<comment type="pathway">
    <text evidence="1">Cell wall biogenesis; peptidoglycan biosynthesis.</text>
</comment>
<comment type="subcellular location">
    <subcellularLocation>
        <location evidence="1">Cytoplasm</location>
    </subcellularLocation>
</comment>
<comment type="similarity">
    <text evidence="1">Belongs to the MurB family.</text>
</comment>
<proteinExistence type="inferred from homology"/>
<reference key="1">
    <citation type="submission" date="2008-05" db="EMBL/GenBank/DDBJ databases">
        <title>Complete sequence of chromosome of Geobacter lovleyi SZ.</title>
        <authorList>
            <consortium name="US DOE Joint Genome Institute"/>
            <person name="Lucas S."/>
            <person name="Copeland A."/>
            <person name="Lapidus A."/>
            <person name="Glavina del Rio T."/>
            <person name="Dalin E."/>
            <person name="Tice H."/>
            <person name="Bruce D."/>
            <person name="Goodwin L."/>
            <person name="Pitluck S."/>
            <person name="Chertkov O."/>
            <person name="Meincke L."/>
            <person name="Brettin T."/>
            <person name="Detter J.C."/>
            <person name="Han C."/>
            <person name="Tapia R."/>
            <person name="Kuske C.R."/>
            <person name="Schmutz J."/>
            <person name="Larimer F."/>
            <person name="Land M."/>
            <person name="Hauser L."/>
            <person name="Kyrpides N."/>
            <person name="Mikhailova N."/>
            <person name="Sung Y."/>
            <person name="Fletcher K.E."/>
            <person name="Ritalahti K.M."/>
            <person name="Loeffler F.E."/>
            <person name="Richardson P."/>
        </authorList>
    </citation>
    <scope>NUCLEOTIDE SEQUENCE [LARGE SCALE GENOMIC DNA]</scope>
    <source>
        <strain>ATCC BAA-1151 / DSM 17278 / SZ</strain>
    </source>
</reference>
<evidence type="ECO:0000255" key="1">
    <source>
        <dbReference type="HAMAP-Rule" id="MF_00037"/>
    </source>
</evidence>
<keyword id="KW-0131">Cell cycle</keyword>
<keyword id="KW-0132">Cell division</keyword>
<keyword id="KW-0133">Cell shape</keyword>
<keyword id="KW-0961">Cell wall biogenesis/degradation</keyword>
<keyword id="KW-0963">Cytoplasm</keyword>
<keyword id="KW-0274">FAD</keyword>
<keyword id="KW-0285">Flavoprotein</keyword>
<keyword id="KW-0521">NADP</keyword>
<keyword id="KW-0560">Oxidoreductase</keyword>
<keyword id="KW-0573">Peptidoglycan synthesis</keyword>
<keyword id="KW-1185">Reference proteome</keyword>
<organism>
    <name type="scientific">Trichlorobacter lovleyi (strain ATCC BAA-1151 / DSM 17278 / SZ)</name>
    <name type="common">Geobacter lovleyi</name>
    <dbReference type="NCBI Taxonomy" id="398767"/>
    <lineage>
        <taxon>Bacteria</taxon>
        <taxon>Pseudomonadati</taxon>
        <taxon>Thermodesulfobacteriota</taxon>
        <taxon>Desulfuromonadia</taxon>
        <taxon>Geobacterales</taxon>
        <taxon>Geobacteraceae</taxon>
        <taxon>Trichlorobacter</taxon>
    </lineage>
</organism>